<accession>Q9BGL9</accession>
<name>CF015_MACMU</name>
<reference key="1">
    <citation type="journal article" date="2001" name="Mamm. Genome">
        <title>A new gene (rmSTG) specific for taste buds is found by laser capture microdissection.</title>
        <authorList>
            <person name="Neira M."/>
            <person name="Danilova V."/>
            <person name="Hellekant G."/>
            <person name="Azen E.A."/>
        </authorList>
    </citation>
    <scope>NUCLEOTIDE SEQUENCE [GENOMIC DNA]</scope>
    <scope>TISSUE SPECIFICITY</scope>
    <source>
        <tissue>Taste bud</tissue>
    </source>
</reference>
<reference key="2">
    <citation type="journal article" date="2004" name="Mol. Biol. Evol.">
        <title>Rhesus macaque class I duplicon structures, organization, and evolution within the alpha block of the major histocompatibility complex.</title>
        <authorList>
            <person name="Kulski J.K."/>
            <person name="Anzai T."/>
            <person name="Shiina T."/>
            <person name="Inoko H."/>
        </authorList>
    </citation>
    <scope>NUCLEOTIDE SEQUENCE [LARGE SCALE GENOMIC DNA]</scope>
</reference>
<keyword id="KW-0272">Extracellular matrix</keyword>
<keyword id="KW-1185">Reference proteome</keyword>
<keyword id="KW-0964">Secreted</keyword>
<keyword id="KW-0732">Signal</keyword>
<comment type="subunit">
    <text evidence="1">Binds to numerous extracellular matrix proteins.</text>
</comment>
<comment type="subcellular location">
    <subcellularLocation>
        <location evidence="1">Secreted</location>
        <location evidence="1">Extracellular space</location>
        <location evidence="1">Extracellular matrix</location>
    </subcellularLocation>
</comment>
<comment type="tissue specificity">
    <text evidence="4">Taste cell specific.</text>
</comment>
<sequence length="314" mass="32985">MRGRVAGSCAPLGLLLVCLRLPGLFARSIGAVEEKVSQNLGTNLPQLGQPSLTGPPNSEHPQPALDLRSNDLARAPLKLSVPPSDGFPPAGGSAVQRWPLSGRLPAMYSWPPEDPWLMMAAAAADRLGEALPEELSYLSSAAALAPGSGPLPGESSPDATDLSPEASHLHQDSESRRLPRSNPLGPGGKILSQRPPWSLIYRVLPDHPWGTLNPSVSWGGGGPGTGWGTRPMPHPGGIWGINNQPPGTSWGNINRYPGGSWGNINRYPGGSWGNIHLYPGINNPFPPGVLRPPGSSWNTPAGFPNPPSPGLQWG</sequence>
<protein>
    <recommendedName>
        <fullName>Uncharacterized protein C6orf15 homolog</fullName>
    </recommendedName>
    <alternativeName>
        <fullName>Protein STG</fullName>
        <shortName>rmSTG</shortName>
    </alternativeName>
</protein>
<organism>
    <name type="scientific">Macaca mulatta</name>
    <name type="common">Rhesus macaque</name>
    <dbReference type="NCBI Taxonomy" id="9544"/>
    <lineage>
        <taxon>Eukaryota</taxon>
        <taxon>Metazoa</taxon>
        <taxon>Chordata</taxon>
        <taxon>Craniata</taxon>
        <taxon>Vertebrata</taxon>
        <taxon>Euteleostomi</taxon>
        <taxon>Mammalia</taxon>
        <taxon>Eutheria</taxon>
        <taxon>Euarchontoglires</taxon>
        <taxon>Primates</taxon>
        <taxon>Haplorrhini</taxon>
        <taxon>Catarrhini</taxon>
        <taxon>Cercopithecidae</taxon>
        <taxon>Cercopithecinae</taxon>
        <taxon>Macaca</taxon>
    </lineage>
</organism>
<feature type="signal peptide" evidence="2">
    <location>
        <begin position="1"/>
        <end position="26"/>
    </location>
</feature>
<feature type="chain" id="PRO_0000019542" description="Uncharacterized protein C6orf15 homolog">
    <location>
        <begin position="27"/>
        <end position="314"/>
    </location>
</feature>
<feature type="region of interest" description="Disordered" evidence="3">
    <location>
        <begin position="41"/>
        <end position="65"/>
    </location>
</feature>
<feature type="region of interest" description="Disordered" evidence="3">
    <location>
        <begin position="77"/>
        <end position="96"/>
    </location>
</feature>
<feature type="region of interest" description="Disordered" evidence="3">
    <location>
        <begin position="147"/>
        <end position="191"/>
    </location>
</feature>
<feature type="region of interest" description="Disordered" evidence="3">
    <location>
        <begin position="292"/>
        <end position="314"/>
    </location>
</feature>
<feature type="compositionally biased region" description="Polar residues" evidence="3">
    <location>
        <begin position="41"/>
        <end position="60"/>
    </location>
</feature>
<feature type="compositionally biased region" description="Low complexity" evidence="3">
    <location>
        <begin position="147"/>
        <end position="157"/>
    </location>
</feature>
<feature type="compositionally biased region" description="Basic and acidic residues" evidence="3">
    <location>
        <begin position="167"/>
        <end position="177"/>
    </location>
</feature>
<feature type="compositionally biased region" description="Pro residues" evidence="3">
    <location>
        <begin position="303"/>
        <end position="314"/>
    </location>
</feature>
<proteinExistence type="evidence at transcript level"/>
<gene>
    <name type="primary">STG</name>
</gene>
<dbReference type="EMBL" id="AF245204">
    <property type="protein sequence ID" value="AAK09263.1"/>
    <property type="molecule type" value="Genomic_DNA"/>
</dbReference>
<dbReference type="EMBL" id="AB128049">
    <property type="protein sequence ID" value="BAD69750.1"/>
    <property type="molecule type" value="Genomic_DNA"/>
</dbReference>
<dbReference type="RefSeq" id="NP_001108433.1">
    <property type="nucleotide sequence ID" value="NM_001114961.1"/>
</dbReference>
<dbReference type="STRING" id="9544.ENSMMUP00000075556"/>
<dbReference type="PaxDb" id="9544-ENSMMUP00000020572"/>
<dbReference type="GeneID" id="100141389"/>
<dbReference type="KEGG" id="mcc:100141389"/>
<dbReference type="CTD" id="105750438"/>
<dbReference type="eggNOG" id="ENOG502SDN4">
    <property type="taxonomic scope" value="Eukaryota"/>
</dbReference>
<dbReference type="InParanoid" id="Q9BGL9"/>
<dbReference type="OrthoDB" id="9446516at2759"/>
<dbReference type="Proteomes" id="UP000006718">
    <property type="component" value="Unassembled WGS sequence"/>
</dbReference>
<dbReference type="GO" id="GO:0031012">
    <property type="term" value="C:extracellular matrix"/>
    <property type="evidence" value="ECO:0000318"/>
    <property type="project" value="GO_Central"/>
</dbReference>
<dbReference type="GO" id="GO:0005576">
    <property type="term" value="C:extracellular region"/>
    <property type="evidence" value="ECO:0007669"/>
    <property type="project" value="UniProtKB-KW"/>
</dbReference>
<dbReference type="GO" id="GO:0030198">
    <property type="term" value="P:extracellular matrix organization"/>
    <property type="evidence" value="ECO:0000318"/>
    <property type="project" value="GO_Central"/>
</dbReference>
<dbReference type="InterPro" id="IPR026135">
    <property type="entry name" value="C6orf15"/>
</dbReference>
<dbReference type="PANTHER" id="PTHR15817:SF2">
    <property type="entry name" value="SIMILAR TO RIKEN CDNA 2300002M23"/>
    <property type="match status" value="1"/>
</dbReference>
<dbReference type="PANTHER" id="PTHR15817">
    <property type="entry name" value="STG PROTEIN"/>
    <property type="match status" value="1"/>
</dbReference>
<dbReference type="Pfam" id="PF15809">
    <property type="entry name" value="STG"/>
    <property type="match status" value="1"/>
</dbReference>
<evidence type="ECO:0000250" key="1"/>
<evidence type="ECO:0000255" key="2"/>
<evidence type="ECO:0000256" key="3">
    <source>
        <dbReference type="SAM" id="MobiDB-lite"/>
    </source>
</evidence>
<evidence type="ECO:0000269" key="4">
    <source>
    </source>
</evidence>